<organism>
    <name type="scientific">Lachnoclostridium phytofermentans (strain ATCC 700394 / DSM 18823 / ISDg)</name>
    <name type="common">Clostridium phytofermentans</name>
    <dbReference type="NCBI Taxonomy" id="357809"/>
    <lineage>
        <taxon>Bacteria</taxon>
        <taxon>Bacillati</taxon>
        <taxon>Bacillota</taxon>
        <taxon>Clostridia</taxon>
        <taxon>Lachnospirales</taxon>
        <taxon>Lachnospiraceae</taxon>
    </lineage>
</organism>
<accession>A9KPP1</accession>
<reference key="1">
    <citation type="submission" date="2007-11" db="EMBL/GenBank/DDBJ databases">
        <title>Complete genome sequence of Clostridium phytofermentans ISDg.</title>
        <authorList>
            <person name="Leschine S.B."/>
            <person name="Warnick T.A."/>
            <person name="Blanchard J.L."/>
            <person name="Schnell D.J."/>
            <person name="Petit E.L."/>
            <person name="LaTouf W.G."/>
            <person name="Copeland A."/>
            <person name="Lucas S."/>
            <person name="Lapidus A."/>
            <person name="Barry K."/>
            <person name="Glavina del Rio T."/>
            <person name="Dalin E."/>
            <person name="Tice H."/>
            <person name="Pitluck S."/>
            <person name="Kiss H."/>
            <person name="Brettin T."/>
            <person name="Bruce D."/>
            <person name="Detter J.C."/>
            <person name="Han C."/>
            <person name="Kuske C."/>
            <person name="Schmutz J."/>
            <person name="Larimer F."/>
            <person name="Land M."/>
            <person name="Hauser L."/>
            <person name="Kyrpides N."/>
            <person name="Kim E.A."/>
            <person name="Richardson P."/>
        </authorList>
    </citation>
    <scope>NUCLEOTIDE SEQUENCE [LARGE SCALE GENOMIC DNA]</scope>
    <source>
        <strain>ATCC 700394 / DSM 18823 / ISDg</strain>
    </source>
</reference>
<gene>
    <name evidence="1" type="primary">dnaA</name>
    <name type="ordered locus">Cphy_0001</name>
</gene>
<sequence>MKSLIQEKWNEILEFLKIEYNVTEVSYKTWLLPLKVYDVKDNVIKLSVDDTKIGANSLDFIKNKYSQFLKTAIAEVINQDFEIEFVLLSQTKAEEKVQTQAPNKIKNESLSYLNPRYTFDTFVVGANNNLAHAASLAVAESPAEIYNPLFIYGGVGLGKTHLMHSIAHYILEQNPNSKVLYVTSEKFTNELIESIRNADTTPTEFREKYRNIDVLLIDDIQFIIGKERTQEEFFHTFNTLHESKKQIIISSDKPPKDILTLEERLRSRFEWGLTVDIQSPDYETRMAILKKKEELDCLTIDDEVMKYIASNIKSNIRELEGALTKIVALSRLKKKEVDVILAEEALKDLISPDNKKTVTLDLIIEVVSEHFTTSTSEIYSDNRSRNIAYPRQIAMYLCRKLTSLSLTDIGKMMGNRDHSTVLHGCNKVEKDIKKDPSFQNTIDVLIKKINPTP</sequence>
<proteinExistence type="inferred from homology"/>
<dbReference type="EMBL" id="CP000885">
    <property type="protein sequence ID" value="ABX40392.1"/>
    <property type="molecule type" value="Genomic_DNA"/>
</dbReference>
<dbReference type="RefSeq" id="WP_012198035.1">
    <property type="nucleotide sequence ID" value="NC_010001.1"/>
</dbReference>
<dbReference type="SMR" id="A9KPP1"/>
<dbReference type="STRING" id="357809.Cphy_0001"/>
<dbReference type="KEGG" id="cpy:Cphy_0001"/>
<dbReference type="eggNOG" id="COG0593">
    <property type="taxonomic scope" value="Bacteria"/>
</dbReference>
<dbReference type="HOGENOM" id="CLU_026910_3_1_9"/>
<dbReference type="OrthoDB" id="9807019at2"/>
<dbReference type="Proteomes" id="UP000000370">
    <property type="component" value="Chromosome"/>
</dbReference>
<dbReference type="GO" id="GO:0005737">
    <property type="term" value="C:cytoplasm"/>
    <property type="evidence" value="ECO:0007669"/>
    <property type="project" value="UniProtKB-SubCell"/>
</dbReference>
<dbReference type="GO" id="GO:0005886">
    <property type="term" value="C:plasma membrane"/>
    <property type="evidence" value="ECO:0007669"/>
    <property type="project" value="TreeGrafter"/>
</dbReference>
<dbReference type="GO" id="GO:0005524">
    <property type="term" value="F:ATP binding"/>
    <property type="evidence" value="ECO:0007669"/>
    <property type="project" value="UniProtKB-UniRule"/>
</dbReference>
<dbReference type="GO" id="GO:0016887">
    <property type="term" value="F:ATP hydrolysis activity"/>
    <property type="evidence" value="ECO:0007669"/>
    <property type="project" value="InterPro"/>
</dbReference>
<dbReference type="GO" id="GO:0003688">
    <property type="term" value="F:DNA replication origin binding"/>
    <property type="evidence" value="ECO:0007669"/>
    <property type="project" value="UniProtKB-UniRule"/>
</dbReference>
<dbReference type="GO" id="GO:0008289">
    <property type="term" value="F:lipid binding"/>
    <property type="evidence" value="ECO:0007669"/>
    <property type="project" value="UniProtKB-KW"/>
</dbReference>
<dbReference type="GO" id="GO:0006270">
    <property type="term" value="P:DNA replication initiation"/>
    <property type="evidence" value="ECO:0007669"/>
    <property type="project" value="UniProtKB-UniRule"/>
</dbReference>
<dbReference type="GO" id="GO:0006275">
    <property type="term" value="P:regulation of DNA replication"/>
    <property type="evidence" value="ECO:0007669"/>
    <property type="project" value="UniProtKB-UniRule"/>
</dbReference>
<dbReference type="CDD" id="cd00009">
    <property type="entry name" value="AAA"/>
    <property type="match status" value="1"/>
</dbReference>
<dbReference type="CDD" id="cd06571">
    <property type="entry name" value="Bac_DnaA_C"/>
    <property type="match status" value="1"/>
</dbReference>
<dbReference type="FunFam" id="1.10.8.60:FF:000003">
    <property type="entry name" value="Chromosomal replication initiator protein DnaA"/>
    <property type="match status" value="1"/>
</dbReference>
<dbReference type="FunFam" id="3.40.50.300:FF:000150">
    <property type="entry name" value="Chromosomal replication initiator protein DnaA"/>
    <property type="match status" value="1"/>
</dbReference>
<dbReference type="Gene3D" id="1.10.1750.10">
    <property type="match status" value="1"/>
</dbReference>
<dbReference type="Gene3D" id="1.10.8.60">
    <property type="match status" value="1"/>
</dbReference>
<dbReference type="Gene3D" id="3.30.300.180">
    <property type="match status" value="1"/>
</dbReference>
<dbReference type="Gene3D" id="3.40.50.300">
    <property type="entry name" value="P-loop containing nucleotide triphosphate hydrolases"/>
    <property type="match status" value="1"/>
</dbReference>
<dbReference type="HAMAP" id="MF_00377">
    <property type="entry name" value="DnaA_bact"/>
    <property type="match status" value="1"/>
</dbReference>
<dbReference type="InterPro" id="IPR003593">
    <property type="entry name" value="AAA+_ATPase"/>
</dbReference>
<dbReference type="InterPro" id="IPR001957">
    <property type="entry name" value="Chromosome_initiator_DnaA"/>
</dbReference>
<dbReference type="InterPro" id="IPR020591">
    <property type="entry name" value="Chromosome_initiator_DnaA-like"/>
</dbReference>
<dbReference type="InterPro" id="IPR018312">
    <property type="entry name" value="Chromosome_initiator_DnaA_CS"/>
</dbReference>
<dbReference type="InterPro" id="IPR013159">
    <property type="entry name" value="DnaA_C"/>
</dbReference>
<dbReference type="InterPro" id="IPR013317">
    <property type="entry name" value="DnaA_dom"/>
</dbReference>
<dbReference type="InterPro" id="IPR024633">
    <property type="entry name" value="DnaA_N_dom"/>
</dbReference>
<dbReference type="InterPro" id="IPR038454">
    <property type="entry name" value="DnaA_N_sf"/>
</dbReference>
<dbReference type="InterPro" id="IPR027417">
    <property type="entry name" value="P-loop_NTPase"/>
</dbReference>
<dbReference type="InterPro" id="IPR010921">
    <property type="entry name" value="Trp_repressor/repl_initiator"/>
</dbReference>
<dbReference type="NCBIfam" id="TIGR00362">
    <property type="entry name" value="DnaA"/>
    <property type="match status" value="1"/>
</dbReference>
<dbReference type="PANTHER" id="PTHR30050">
    <property type="entry name" value="CHROMOSOMAL REPLICATION INITIATOR PROTEIN DNAA"/>
    <property type="match status" value="1"/>
</dbReference>
<dbReference type="PANTHER" id="PTHR30050:SF2">
    <property type="entry name" value="CHROMOSOMAL REPLICATION INITIATOR PROTEIN DNAA"/>
    <property type="match status" value="1"/>
</dbReference>
<dbReference type="Pfam" id="PF00308">
    <property type="entry name" value="Bac_DnaA"/>
    <property type="match status" value="1"/>
</dbReference>
<dbReference type="Pfam" id="PF08299">
    <property type="entry name" value="Bac_DnaA_C"/>
    <property type="match status" value="1"/>
</dbReference>
<dbReference type="Pfam" id="PF11638">
    <property type="entry name" value="DnaA_N"/>
    <property type="match status" value="1"/>
</dbReference>
<dbReference type="PRINTS" id="PR00051">
    <property type="entry name" value="DNAA"/>
</dbReference>
<dbReference type="SMART" id="SM00382">
    <property type="entry name" value="AAA"/>
    <property type="match status" value="1"/>
</dbReference>
<dbReference type="SMART" id="SM00760">
    <property type="entry name" value="Bac_DnaA_C"/>
    <property type="match status" value="1"/>
</dbReference>
<dbReference type="SUPFAM" id="SSF52540">
    <property type="entry name" value="P-loop containing nucleoside triphosphate hydrolases"/>
    <property type="match status" value="1"/>
</dbReference>
<dbReference type="SUPFAM" id="SSF48295">
    <property type="entry name" value="TrpR-like"/>
    <property type="match status" value="1"/>
</dbReference>
<dbReference type="PROSITE" id="PS01008">
    <property type="entry name" value="DNAA"/>
    <property type="match status" value="1"/>
</dbReference>
<name>DNAA_LACP7</name>
<evidence type="ECO:0000255" key="1">
    <source>
        <dbReference type="HAMAP-Rule" id="MF_00377"/>
    </source>
</evidence>
<protein>
    <recommendedName>
        <fullName evidence="1">Chromosomal replication initiator protein DnaA</fullName>
    </recommendedName>
</protein>
<feature type="chain" id="PRO_1000121965" description="Chromosomal replication initiator protein DnaA">
    <location>
        <begin position="1"/>
        <end position="453"/>
    </location>
</feature>
<feature type="region of interest" description="Domain I, interacts with DnaA modulators" evidence="1">
    <location>
        <begin position="1"/>
        <end position="79"/>
    </location>
</feature>
<feature type="region of interest" description="Domain II" evidence="1">
    <location>
        <begin position="79"/>
        <end position="111"/>
    </location>
</feature>
<feature type="region of interest" description="Domain III, AAA+ region" evidence="1">
    <location>
        <begin position="112"/>
        <end position="330"/>
    </location>
</feature>
<feature type="region of interest" description="Domain IV, binds dsDNA" evidence="1">
    <location>
        <begin position="331"/>
        <end position="453"/>
    </location>
</feature>
<feature type="binding site" evidence="1">
    <location>
        <position position="156"/>
    </location>
    <ligand>
        <name>ATP</name>
        <dbReference type="ChEBI" id="CHEBI:30616"/>
    </ligand>
</feature>
<feature type="binding site" evidence="1">
    <location>
        <position position="158"/>
    </location>
    <ligand>
        <name>ATP</name>
        <dbReference type="ChEBI" id="CHEBI:30616"/>
    </ligand>
</feature>
<feature type="binding site" evidence="1">
    <location>
        <position position="159"/>
    </location>
    <ligand>
        <name>ATP</name>
        <dbReference type="ChEBI" id="CHEBI:30616"/>
    </ligand>
</feature>
<feature type="binding site" evidence="1">
    <location>
        <position position="160"/>
    </location>
    <ligand>
        <name>ATP</name>
        <dbReference type="ChEBI" id="CHEBI:30616"/>
    </ligand>
</feature>
<keyword id="KW-0067">ATP-binding</keyword>
<keyword id="KW-0963">Cytoplasm</keyword>
<keyword id="KW-0235">DNA replication</keyword>
<keyword id="KW-0238">DNA-binding</keyword>
<keyword id="KW-0446">Lipid-binding</keyword>
<keyword id="KW-0547">Nucleotide-binding</keyword>
<keyword id="KW-1185">Reference proteome</keyword>
<comment type="function">
    <text evidence="1">Plays an essential role in the initiation and regulation of chromosomal replication. ATP-DnaA binds to the origin of replication (oriC) to initiate formation of the DNA replication initiation complex once per cell cycle. Binds the DnaA box (a 9 base pair repeat at the origin) and separates the double-stranded (ds)DNA. Forms a right-handed helical filament on oriC DNA; dsDNA binds to the exterior of the filament while single-stranded (ss)DNA is stabiized in the filament's interior. The ATP-DnaA-oriC complex binds and stabilizes one strand of the AT-rich DNA unwinding element (DUE), permitting loading of DNA polymerase. After initiation quickly degrades to an ADP-DnaA complex that is not apt for DNA replication. Binds acidic phospholipids.</text>
</comment>
<comment type="subunit">
    <text evidence="1">Oligomerizes as a right-handed, spiral filament on DNA at oriC.</text>
</comment>
<comment type="subcellular location">
    <subcellularLocation>
        <location evidence="1">Cytoplasm</location>
    </subcellularLocation>
</comment>
<comment type="domain">
    <text evidence="1">Domain I is involved in oligomerization and binding regulators, domain II is flexibile and of varying length in different bacteria, domain III forms the AAA+ region, while domain IV binds dsDNA.</text>
</comment>
<comment type="similarity">
    <text evidence="1">Belongs to the DnaA family.</text>
</comment>